<protein>
    <recommendedName>
        <fullName>DNA ligase 4</fullName>
        <ecNumber evidence="5">6.5.1.1</ecNumber>
    </recommendedName>
    <alternativeName>
        <fullName>DNA ligase IV</fullName>
    </alternativeName>
    <alternativeName>
        <fullName>Polydeoxyribonucleotide synthase [ATP] 4</fullName>
    </alternativeName>
</protein>
<organism>
    <name type="scientific">Arabidopsis thaliana</name>
    <name type="common">Mouse-ear cress</name>
    <dbReference type="NCBI Taxonomy" id="3702"/>
    <lineage>
        <taxon>Eukaryota</taxon>
        <taxon>Viridiplantae</taxon>
        <taxon>Streptophyta</taxon>
        <taxon>Embryophyta</taxon>
        <taxon>Tracheophyta</taxon>
        <taxon>Spermatophyta</taxon>
        <taxon>Magnoliopsida</taxon>
        <taxon>eudicotyledons</taxon>
        <taxon>Gunneridae</taxon>
        <taxon>Pentapetalae</taxon>
        <taxon>rosids</taxon>
        <taxon>malvids</taxon>
        <taxon>Brassicales</taxon>
        <taxon>Brassicaceae</taxon>
        <taxon>Camelineae</taxon>
        <taxon>Arabidopsis</taxon>
    </lineage>
</organism>
<proteinExistence type="evidence at protein level"/>
<gene>
    <name type="primary">LIG4</name>
    <name type="ordered locus">At5g57160</name>
    <name type="ORF">MUL3.11</name>
</gene>
<evidence type="ECO:0000250" key="1"/>
<evidence type="ECO:0000250" key="2">
    <source>
        <dbReference type="UniProtKB" id="P49917"/>
    </source>
</evidence>
<evidence type="ECO:0000255" key="3"/>
<evidence type="ECO:0000255" key="4">
    <source>
        <dbReference type="PROSITE-ProRule" id="PRU00033"/>
    </source>
</evidence>
<evidence type="ECO:0000255" key="5">
    <source>
        <dbReference type="PROSITE-ProRule" id="PRU10135"/>
    </source>
</evidence>
<evidence type="ECO:0000256" key="6">
    <source>
        <dbReference type="SAM" id="MobiDB-lite"/>
    </source>
</evidence>
<evidence type="ECO:0000269" key="7">
    <source>
    </source>
</evidence>
<evidence type="ECO:0000269" key="8">
    <source>
    </source>
</evidence>
<evidence type="ECO:0000269" key="9">
    <source>
    </source>
</evidence>
<evidence type="ECO:0000269" key="10">
    <source>
    </source>
</evidence>
<evidence type="ECO:0000269" key="11">
    <source>
    </source>
</evidence>
<evidence type="ECO:0000305" key="12"/>
<reference key="1">
    <citation type="journal article" date="2000" name="Plant J.">
        <title>Arabidopsis DNA ligase IV is induced by gamma-irradiation and interacts with an Arabidopsis homologue of the double strand break repair protein XRCC4.</title>
        <authorList>
            <person name="West C.E."/>
            <person name="Waterworth W.M."/>
            <person name="Jiang Q."/>
            <person name="Bray C.M."/>
        </authorList>
    </citation>
    <scope>NUCLEOTIDE SEQUENCE [MRNA]</scope>
    <scope>INDUCTION</scope>
    <scope>TISSUE SPECIFICITY</scope>
    <scope>INTERACTION WITH XRCC4</scope>
</reference>
<reference key="2">
    <citation type="journal article" date="2000" name="DNA Res.">
        <title>Structural analysis of Arabidopsis thaliana chromosome 5. X. Sequence features of the regions of 3,076,755 bp covered by sixty P1 and TAC clones.</title>
        <authorList>
            <person name="Sato S."/>
            <person name="Nakamura Y."/>
            <person name="Kaneko T."/>
            <person name="Katoh T."/>
            <person name="Asamizu E."/>
            <person name="Kotani H."/>
            <person name="Tabata S."/>
        </authorList>
    </citation>
    <scope>NUCLEOTIDE SEQUENCE [LARGE SCALE GENOMIC DNA]</scope>
</reference>
<reference key="3">
    <citation type="journal article" date="2017" name="Plant J.">
        <title>Araport11: a complete reannotation of the Arabidopsis thaliana reference genome.</title>
        <authorList>
            <person name="Cheng C.Y."/>
            <person name="Krishnakumar V."/>
            <person name="Chan A.P."/>
            <person name="Thibaud-Nissen F."/>
            <person name="Schobel S."/>
            <person name="Town C.D."/>
        </authorList>
    </citation>
    <scope>GENOME REANNOTATION</scope>
    <source>
        <strain>cv. Columbia</strain>
    </source>
</reference>
<reference key="4">
    <citation type="journal article" date="2003" name="Nucleic Acids Res.">
        <title>The Arabidopsis AtLIG4 gene is required for the repair of DNA damage, but not for the integration of Agrobacterium T-DNA.</title>
        <authorList>
            <person name="van Attikum H."/>
            <person name="Bundock P."/>
            <person name="Overmeer R.M."/>
            <person name="Lee L.-Y."/>
            <person name="Gelvin S.B."/>
            <person name="Hooykaas P.J.J."/>
        </authorList>
    </citation>
    <scope>FUNCTION</scope>
</reference>
<reference key="5">
    <citation type="journal article" date="2003" name="Plant Cell">
        <title>AtATM is essential for meiosis and the somatic response to DNA damage in plants.</title>
        <authorList>
            <person name="Garcia V."/>
            <person name="Bruchet H."/>
            <person name="Camescasse D."/>
            <person name="Granier F."/>
            <person name="Bouchez D."/>
            <person name="Tissier A."/>
        </authorList>
    </citation>
    <scope>INDUCTION</scope>
</reference>
<reference key="6">
    <citation type="journal article" date="2003" name="Plant J.">
        <title>Ku80- and DNA ligase IV-deficient plants are sensitive to ionizing radiation and defective in T-DNA integration.</title>
        <authorList>
            <person name="Friesner J."/>
            <person name="Britt A.B."/>
        </authorList>
    </citation>
    <scope>FUNCTION</scope>
</reference>
<reference key="7">
    <citation type="journal article" date="2013" name="Plant Physiol.">
        <title>Involvement of AtPollambda in the repair of high salt- and DNA cross-linking agent-induced double strand breaks in Arabidopsis.</title>
        <authorList>
            <person name="Roy S."/>
            <person name="Choudhury S.R."/>
            <person name="Sengupta D.N."/>
            <person name="Das K.P."/>
        </authorList>
    </citation>
    <scope>INTERACTION WITH POLL</scope>
</reference>
<name>DNLI4_ARATH</name>
<keyword id="KW-0067">ATP-binding</keyword>
<keyword id="KW-0227">DNA damage</keyword>
<keyword id="KW-0233">DNA recombination</keyword>
<keyword id="KW-0234">DNA repair</keyword>
<keyword id="KW-0436">Ligase</keyword>
<keyword id="KW-0460">Magnesium</keyword>
<keyword id="KW-0479">Metal-binding</keyword>
<keyword id="KW-0547">Nucleotide-binding</keyword>
<keyword id="KW-0539">Nucleus</keyword>
<keyword id="KW-1185">Reference proteome</keyword>
<keyword id="KW-0677">Repeat</keyword>
<dbReference type="EC" id="6.5.1.1" evidence="5"/>
<dbReference type="EMBL" id="AF233527">
    <property type="protein sequence ID" value="AAF91284.1"/>
    <property type="molecule type" value="mRNA"/>
</dbReference>
<dbReference type="EMBL" id="AB023042">
    <property type="protein sequence ID" value="BAA97366.1"/>
    <property type="status" value="ALT_SEQ"/>
    <property type="molecule type" value="Genomic_DNA"/>
</dbReference>
<dbReference type="EMBL" id="CP002688">
    <property type="protein sequence ID" value="AED96857.1"/>
    <property type="molecule type" value="Genomic_DNA"/>
</dbReference>
<dbReference type="RefSeq" id="NP_568851.2">
    <property type="nucleotide sequence ID" value="NM_125098.4"/>
</dbReference>
<dbReference type="SMR" id="Q9LL84"/>
<dbReference type="BioGRID" id="21066">
    <property type="interactions" value="3"/>
</dbReference>
<dbReference type="FunCoup" id="Q9LL84">
    <property type="interactions" value="3577"/>
</dbReference>
<dbReference type="IntAct" id="Q9LL84">
    <property type="interactions" value="1"/>
</dbReference>
<dbReference type="STRING" id="3702.Q9LL84"/>
<dbReference type="iPTMnet" id="Q9LL84"/>
<dbReference type="PaxDb" id="3702-AT5G57160.1"/>
<dbReference type="ProteomicsDB" id="222612"/>
<dbReference type="EnsemblPlants" id="AT5G57160.1">
    <property type="protein sequence ID" value="AT5G57160.1"/>
    <property type="gene ID" value="AT5G57160"/>
</dbReference>
<dbReference type="GeneID" id="835822"/>
<dbReference type="Gramene" id="AT5G57160.1">
    <property type="protein sequence ID" value="AT5G57160.1"/>
    <property type="gene ID" value="AT5G57160"/>
</dbReference>
<dbReference type="KEGG" id="ath:AT5G57160"/>
<dbReference type="Araport" id="AT5G57160"/>
<dbReference type="TAIR" id="AT5G57160">
    <property type="gene designation" value="ATLIG4"/>
</dbReference>
<dbReference type="eggNOG" id="KOG0966">
    <property type="taxonomic scope" value="Eukaryota"/>
</dbReference>
<dbReference type="HOGENOM" id="CLU_004844_3_0_1"/>
<dbReference type="InParanoid" id="Q9LL84"/>
<dbReference type="OMA" id="IMLQHRT"/>
<dbReference type="OrthoDB" id="151490at2759"/>
<dbReference type="PhylomeDB" id="Q9LL84"/>
<dbReference type="PRO" id="PR:Q9LL84"/>
<dbReference type="Proteomes" id="UP000006548">
    <property type="component" value="Chromosome 5"/>
</dbReference>
<dbReference type="ExpressionAtlas" id="Q9LL84">
    <property type="expression patterns" value="baseline and differential"/>
</dbReference>
<dbReference type="GO" id="GO:0005634">
    <property type="term" value="C:nucleus"/>
    <property type="evidence" value="ECO:0007669"/>
    <property type="project" value="UniProtKB-SubCell"/>
</dbReference>
<dbReference type="GO" id="GO:0009506">
    <property type="term" value="C:plasmodesma"/>
    <property type="evidence" value="ECO:0007005"/>
    <property type="project" value="TAIR"/>
</dbReference>
<dbReference type="GO" id="GO:0005524">
    <property type="term" value="F:ATP binding"/>
    <property type="evidence" value="ECO:0007669"/>
    <property type="project" value="UniProtKB-KW"/>
</dbReference>
<dbReference type="GO" id="GO:0003677">
    <property type="term" value="F:DNA binding"/>
    <property type="evidence" value="ECO:0007669"/>
    <property type="project" value="InterPro"/>
</dbReference>
<dbReference type="GO" id="GO:0003910">
    <property type="term" value="F:DNA ligase (ATP) activity"/>
    <property type="evidence" value="ECO:0000314"/>
    <property type="project" value="TAIR"/>
</dbReference>
<dbReference type="GO" id="GO:0046872">
    <property type="term" value="F:metal ion binding"/>
    <property type="evidence" value="ECO:0007669"/>
    <property type="project" value="UniProtKB-KW"/>
</dbReference>
<dbReference type="GO" id="GO:0071897">
    <property type="term" value="P:DNA biosynthetic process"/>
    <property type="evidence" value="ECO:0007669"/>
    <property type="project" value="InterPro"/>
</dbReference>
<dbReference type="GO" id="GO:0006974">
    <property type="term" value="P:DNA damage response"/>
    <property type="evidence" value="ECO:0000315"/>
    <property type="project" value="TAIR"/>
</dbReference>
<dbReference type="GO" id="GO:0006310">
    <property type="term" value="P:DNA recombination"/>
    <property type="evidence" value="ECO:0007669"/>
    <property type="project" value="UniProtKB-KW"/>
</dbReference>
<dbReference type="GO" id="GO:0006302">
    <property type="term" value="P:double-strand break repair"/>
    <property type="evidence" value="ECO:0000315"/>
    <property type="project" value="TAIR"/>
</dbReference>
<dbReference type="GO" id="GO:0006303">
    <property type="term" value="P:double-strand break repair via nonhomologous end joining"/>
    <property type="evidence" value="ECO:0000315"/>
    <property type="project" value="TAIR"/>
</dbReference>
<dbReference type="GO" id="GO:0010165">
    <property type="term" value="P:response to X-ray"/>
    <property type="evidence" value="ECO:0000315"/>
    <property type="project" value="TAIR"/>
</dbReference>
<dbReference type="CDD" id="cd07903">
    <property type="entry name" value="Adenylation_DNA_ligase_IV"/>
    <property type="match status" value="1"/>
</dbReference>
<dbReference type="CDD" id="cd17722">
    <property type="entry name" value="BRCT_DNA_ligase_IV_rpt1"/>
    <property type="match status" value="1"/>
</dbReference>
<dbReference type="CDD" id="cd17717">
    <property type="entry name" value="BRCT_DNA_ligase_IV_rpt2"/>
    <property type="match status" value="1"/>
</dbReference>
<dbReference type="CDD" id="cd07968">
    <property type="entry name" value="OBF_DNA_ligase_IV"/>
    <property type="match status" value="1"/>
</dbReference>
<dbReference type="FunFam" id="1.10.3260.10:FF:000005">
    <property type="entry name" value="DNA ligase"/>
    <property type="match status" value="1"/>
</dbReference>
<dbReference type="FunFam" id="2.40.50.140:FF:000173">
    <property type="entry name" value="DNA ligase"/>
    <property type="match status" value="1"/>
</dbReference>
<dbReference type="FunFam" id="3.30.470.30:FF:000014">
    <property type="entry name" value="DNA ligase"/>
    <property type="match status" value="1"/>
</dbReference>
<dbReference type="FunFam" id="3.40.50.10190:FF:000044">
    <property type="entry name" value="DNA ligase"/>
    <property type="match status" value="1"/>
</dbReference>
<dbReference type="FunFam" id="3.40.50.10190:FF:000072">
    <property type="entry name" value="DNA ligase"/>
    <property type="match status" value="1"/>
</dbReference>
<dbReference type="Gene3D" id="3.40.50.10190">
    <property type="entry name" value="BRCT domain"/>
    <property type="match status" value="2"/>
</dbReference>
<dbReference type="Gene3D" id="1.10.3260.10">
    <property type="entry name" value="DNA ligase, ATP-dependent, N-terminal domain"/>
    <property type="match status" value="1"/>
</dbReference>
<dbReference type="Gene3D" id="3.30.470.30">
    <property type="entry name" value="DNA ligase/mRNA capping enzyme"/>
    <property type="match status" value="1"/>
</dbReference>
<dbReference type="Gene3D" id="2.40.50.140">
    <property type="entry name" value="Nucleic acid-binding proteins"/>
    <property type="match status" value="1"/>
</dbReference>
<dbReference type="InterPro" id="IPR044125">
    <property type="entry name" value="Adenylation_DNA_ligase_IV"/>
</dbReference>
<dbReference type="InterPro" id="IPR001357">
    <property type="entry name" value="BRCT_dom"/>
</dbReference>
<dbReference type="InterPro" id="IPR036420">
    <property type="entry name" value="BRCT_dom_sf"/>
</dbReference>
<dbReference type="InterPro" id="IPR000977">
    <property type="entry name" value="DNA_ligase_ATP-dep"/>
</dbReference>
<dbReference type="InterPro" id="IPR012309">
    <property type="entry name" value="DNA_ligase_ATP-dep_C"/>
</dbReference>
<dbReference type="InterPro" id="IPR012310">
    <property type="entry name" value="DNA_ligase_ATP-dep_cent"/>
</dbReference>
<dbReference type="InterPro" id="IPR016059">
    <property type="entry name" value="DNA_ligase_ATP-dep_CS"/>
</dbReference>
<dbReference type="InterPro" id="IPR012308">
    <property type="entry name" value="DNA_ligase_ATP-dep_N"/>
</dbReference>
<dbReference type="InterPro" id="IPR036599">
    <property type="entry name" value="DNA_ligase_N_sf"/>
</dbReference>
<dbReference type="InterPro" id="IPR029710">
    <property type="entry name" value="LIG4"/>
</dbReference>
<dbReference type="InterPro" id="IPR012340">
    <property type="entry name" value="NA-bd_OB-fold"/>
</dbReference>
<dbReference type="NCBIfam" id="TIGR00574">
    <property type="entry name" value="dnl1"/>
    <property type="match status" value="1"/>
</dbReference>
<dbReference type="PANTHER" id="PTHR45997">
    <property type="entry name" value="DNA LIGASE 4"/>
    <property type="match status" value="1"/>
</dbReference>
<dbReference type="PANTHER" id="PTHR45997:SF1">
    <property type="entry name" value="DNA LIGASE 4"/>
    <property type="match status" value="1"/>
</dbReference>
<dbReference type="Pfam" id="PF16589">
    <property type="entry name" value="BRCT_2"/>
    <property type="match status" value="1"/>
</dbReference>
<dbReference type="Pfam" id="PF04679">
    <property type="entry name" value="DNA_ligase_A_C"/>
    <property type="match status" value="1"/>
</dbReference>
<dbReference type="Pfam" id="PF01068">
    <property type="entry name" value="DNA_ligase_A_M"/>
    <property type="match status" value="1"/>
</dbReference>
<dbReference type="Pfam" id="PF04675">
    <property type="entry name" value="DNA_ligase_A_N"/>
    <property type="match status" value="1"/>
</dbReference>
<dbReference type="SMART" id="SM00292">
    <property type="entry name" value="BRCT"/>
    <property type="match status" value="1"/>
</dbReference>
<dbReference type="SUPFAM" id="SSF117018">
    <property type="entry name" value="ATP-dependent DNA ligase DNA-binding domain"/>
    <property type="match status" value="1"/>
</dbReference>
<dbReference type="SUPFAM" id="SSF52113">
    <property type="entry name" value="BRCT domain"/>
    <property type="match status" value="2"/>
</dbReference>
<dbReference type="SUPFAM" id="SSF56091">
    <property type="entry name" value="DNA ligase/mRNA capping enzyme, catalytic domain"/>
    <property type="match status" value="1"/>
</dbReference>
<dbReference type="SUPFAM" id="SSF50249">
    <property type="entry name" value="Nucleic acid-binding proteins"/>
    <property type="match status" value="1"/>
</dbReference>
<dbReference type="PROSITE" id="PS50172">
    <property type="entry name" value="BRCT"/>
    <property type="match status" value="2"/>
</dbReference>
<dbReference type="PROSITE" id="PS00697">
    <property type="entry name" value="DNA_LIGASE_A1"/>
    <property type="match status" value="1"/>
</dbReference>
<dbReference type="PROSITE" id="PS00333">
    <property type="entry name" value="DNA_LIGASE_A2"/>
    <property type="match status" value="1"/>
</dbReference>
<dbReference type="PROSITE" id="PS50160">
    <property type="entry name" value="DNA_LIGASE_A3"/>
    <property type="match status" value="1"/>
</dbReference>
<sequence>MTEEIKFSVLVSLFNWIQKSKTSSQKRSKFRKFLDTYCKPSDYFVAVRLIIPSLDRERGSYGLKESVLATCLIDALGISRDAPDAVRLLNWRKGGTAKAGANAGNFSLIAAEVLQRRQGMASGGLTIKELNDLLDRLASSENRAEKTLVLSTLIQKTNAQEMKWVIRIILKDLKLGMSEKSIFQEFHPDAEDLFNVTCDLKLVCEKLRDRHQRHKRQDIEVGKAVRPQLAMRIGDVNAAWKKLHGKDVVAECKFDGDRIQIHKNGTDIHYFSRNFLDHSEYAHAMSDLIVQNILVDKCILDGEMLVWDTSLNRFAEFGSNQEIAKAAREGLDSHKQLCYVAFDVLYVGDTSVIHQSLKERHELLKKVVKPLKGRLEVLVPEGGLNVHRPSGEPSWSIVVHAAADVERFFKETVENRDEGIVLKDLESKWEPGDRSGKWMKLKPEYIRAGADLDVLIIGGYYGSGRRGGEVAQFLVALADRAEANVYPRRFMSFCRVGTGLSDDELNTVVSKLKPYFRKNEHPKKAPPSFYQVTNHSKERPDVWIDSPEKSIILSITSDIRTIRSEVFVAPYSLRFPRIDKVRYDKPWHECLDVQAFVELVNSSNGTTQKQKESESTQDNPKVNKSSKRGEKKNVSLVPSQFIQTDVSDIKGKTSIFSNMIFYFVNVPRSHSLETFHKMVVENGGKFSMNLNNSVTHCIAAESSGIKYQAAKRQRDVIHFSWVLDCCSRNKMLPLLPKYFLHLTDASRTKLQDDIDEFSDSYYWDLDLEGLKQVLSNAKQSEDSKSIDYYKKKLCPEKRWSCLLSCCVYFYPYSQTLSTEEEALLGIMAKRLMLEVLMAGGKVSNNLAHASHLVVLAMAEEPLDFTLVSKSFSEMEKRLLLKKRLHVVSSHWLEESLQREEKLCEDVYTLRPKYMEESDTEESDKSEHDTTEVASQGSAQTKEPASSKIAITSSRGRSNTRAVKRGRSSTNSLQRVQRRRGKQPSKISGDETEESDASEEKVSTRLSDIAEETDSFGEAQRNSSRGKCAKRGKSRVGQTQRVQRSRRGKKAAKIGGDESDENDELDGNNNVSADAEEGNAAGRSVENEETREPDIAKYTESQQRDNTVAVEEALQDSRNAKTEMDMKEKLQIHEDPLQAMLMKMFPIPSQKTTETSNRTTGEYRKANVSGECESSEKRKLDAETDNTSVNAGAESDVVPPLVKKKKVSYRDVAGELLKDW</sequence>
<accession>Q9LL84</accession>
<accession>Q9LU70</accession>
<feature type="chain" id="PRO_0000059580" description="DNA ligase 4">
    <location>
        <begin position="1"/>
        <end position="1219"/>
    </location>
</feature>
<feature type="domain" description="BRCT 1" evidence="4">
    <location>
        <begin position="651"/>
        <end position="739"/>
    </location>
</feature>
<feature type="domain" description="BRCT 2" evidence="4">
    <location>
        <begin position="807"/>
        <end position="909"/>
    </location>
</feature>
<feature type="region of interest" description="Disordered" evidence="6">
    <location>
        <begin position="604"/>
        <end position="632"/>
    </location>
</feature>
<feature type="region of interest" description="Disordered" evidence="6">
    <location>
        <begin position="914"/>
        <end position="1126"/>
    </location>
</feature>
<feature type="region of interest" description="Disordered" evidence="6">
    <location>
        <begin position="1146"/>
        <end position="1197"/>
    </location>
</feature>
<feature type="compositionally biased region" description="Polar residues" evidence="6">
    <location>
        <begin position="932"/>
        <end position="960"/>
    </location>
</feature>
<feature type="compositionally biased region" description="Basic residues" evidence="6">
    <location>
        <begin position="1042"/>
        <end position="1051"/>
    </location>
</feature>
<feature type="compositionally biased region" description="Acidic residues" evidence="6">
    <location>
        <begin position="1056"/>
        <end position="1065"/>
    </location>
</feature>
<feature type="compositionally biased region" description="Basic and acidic residues" evidence="6">
    <location>
        <begin position="1084"/>
        <end position="1096"/>
    </location>
</feature>
<feature type="compositionally biased region" description="Basic and acidic residues" evidence="6">
    <location>
        <begin position="1117"/>
        <end position="1126"/>
    </location>
</feature>
<feature type="compositionally biased region" description="Polar residues" evidence="6">
    <location>
        <begin position="1148"/>
        <end position="1159"/>
    </location>
</feature>
<feature type="active site" description="N6-AMP-lysine intermediate" evidence="5">
    <location>
        <position position="253"/>
    </location>
</feature>
<feature type="binding site" evidence="2">
    <location>
        <position position="251"/>
    </location>
    <ligand>
        <name>ATP</name>
        <dbReference type="ChEBI" id="CHEBI:30616"/>
    </ligand>
</feature>
<feature type="binding site" evidence="2">
    <location>
        <position position="253"/>
    </location>
    <ligand>
        <name>ATP</name>
        <dbReference type="ChEBI" id="CHEBI:30616"/>
    </ligand>
</feature>
<feature type="binding site" evidence="2">
    <location>
        <position position="258"/>
    </location>
    <ligand>
        <name>ATP</name>
        <dbReference type="ChEBI" id="CHEBI:30616"/>
    </ligand>
</feature>
<feature type="binding site" evidence="1">
    <location>
        <position position="273"/>
    </location>
    <ligand>
        <name>ATP</name>
        <dbReference type="ChEBI" id="CHEBI:30616"/>
    </ligand>
</feature>
<feature type="binding site" evidence="2">
    <location>
        <position position="303"/>
    </location>
    <ligand>
        <name>ATP</name>
        <dbReference type="ChEBI" id="CHEBI:30616"/>
    </ligand>
</feature>
<feature type="binding site" evidence="3">
    <location>
        <position position="303"/>
    </location>
    <ligand>
        <name>Mg(2+)</name>
        <dbReference type="ChEBI" id="CHEBI:18420"/>
        <label>1</label>
    </ligand>
</feature>
<feature type="binding site" evidence="2">
    <location>
        <position position="342"/>
    </location>
    <ligand>
        <name>ATP</name>
        <dbReference type="ChEBI" id="CHEBI:30616"/>
    </ligand>
</feature>
<feature type="binding site" evidence="2">
    <location>
        <position position="418"/>
    </location>
    <ligand>
        <name>ATP</name>
        <dbReference type="ChEBI" id="CHEBI:30616"/>
    </ligand>
</feature>
<feature type="binding site" evidence="3">
    <location>
        <position position="418"/>
    </location>
    <ligand>
        <name>Mg(2+)</name>
        <dbReference type="ChEBI" id="CHEBI:18420"/>
        <label>2</label>
    </ligand>
</feature>
<feature type="binding site" evidence="2">
    <location>
        <position position="423"/>
    </location>
    <ligand>
        <name>ATP</name>
        <dbReference type="ChEBI" id="CHEBI:30616"/>
    </ligand>
</feature>
<feature type="binding site" evidence="1">
    <location>
        <position position="434"/>
    </location>
    <ligand>
        <name>ATP</name>
        <dbReference type="ChEBI" id="CHEBI:30616"/>
    </ligand>
</feature>
<feature type="binding site" evidence="2">
    <location>
        <position position="440"/>
    </location>
    <ligand>
        <name>ATP</name>
        <dbReference type="ChEBI" id="CHEBI:30616"/>
    </ligand>
</feature>
<feature type="binding site" evidence="2">
    <location>
        <position position="442"/>
    </location>
    <ligand>
        <name>ATP</name>
        <dbReference type="ChEBI" id="CHEBI:30616"/>
    </ligand>
</feature>
<comment type="function">
    <text evidence="9 10">DNA ligase involved in DNA non-homologous end joining (NHEJ); required for double-strand break (DSB) repair. May be involved for T-DNA integration even if not absolutely required. Seems to be dispensable under normal growth conditions.</text>
</comment>
<comment type="catalytic activity">
    <reaction evidence="5">
        <text>ATP + (deoxyribonucleotide)n-3'-hydroxyl + 5'-phospho-(deoxyribonucleotide)m = (deoxyribonucleotide)n+m + AMP + diphosphate.</text>
        <dbReference type="EC" id="6.5.1.1"/>
    </reaction>
</comment>
<comment type="cofactor">
    <cofactor evidence="2">
        <name>Mg(2+)</name>
        <dbReference type="ChEBI" id="CHEBI:18420"/>
    </cofactor>
</comment>
<comment type="subunit">
    <text evidence="7 11">Interacts with XRCC4 via its tandem BRCT domains (PubMed:11029705). Interacts with POLL (PubMed:23660835).</text>
</comment>
<comment type="interaction">
    <interactant intactId="EBI-2127971">
        <id>Q9LL84</id>
    </interactant>
    <interactant intactId="EBI-2128002">
        <id>Q682V0</id>
        <label>XRCC4</label>
    </interactant>
    <organismsDiffer>false</organismsDiffer>
    <experiments>2</experiments>
</comment>
<comment type="subcellular location">
    <subcellularLocation>
        <location evidence="1">Nucleus</location>
    </subcellularLocation>
</comment>
<comment type="tissue specificity">
    <text evidence="7">Widely expressed, with higher levels in young flowers and roots.</text>
</comment>
<comment type="induction">
    <text evidence="7 8">Induced by gamma radiation and by white light, but not by UV-B. Regulated by ATM in response to DNA double strand breaks (DSBs).</text>
</comment>
<comment type="similarity">
    <text evidence="12">Belongs to the ATP-dependent DNA ligase family.</text>
</comment>
<comment type="sequence caution" evidence="12">
    <conflict type="erroneous gene model prediction">
        <sequence resource="EMBL-CDS" id="BAA97366"/>
    </conflict>
</comment>